<sequence>GYAFKPPPRPDFGTSGRTIKLQANFFEMDIPKIDIYHYELDIKPEKCPRRVNREIVEHMVQHFKAQIFGDRKPVFDGRKNLYTAMPLPIGREKVELEVTLPGEGKDRIFKVSIKWVSCVSLQALHDALSGRLPSVPFETIQALDVVMRHLPSMRYTPVGRSFFTASEGCSNPLGGGREVWFGFHQSVRPSLWKMMLNIDVSATAFYKAQPVIEFVCEVLDFKSIEEQQKPLTDSQRVKFTKEIKGLKVEITHCGQMKRKYRVCNVTRRPASHQTFPLQQESGQTVECTVAQYFKDRHKLVLRYPHLPCLQVGQEQKHTYLPLEVCNIVAGQRCIKKLTDNQTSTMIRATARSAPDRQEEISKLMRSASFNTDPYVREFGIMVKDEMTDVTGRVLQPPSILYGGRNKAIATPVQGVWDMRNKQFHTGIEIKVWAIACFAPQRQCTEVHLKSFTEQLRKISRDAGMPIQGQPCFCKYAQGADSVGPMFRHLKNTYAGLQLVVVILPGKTPVYAEVKRVGDTVLGMATQCVQMKNVQRTTPQTLSNLCLKINVKLGGVNNILLPQGRPPVFQQPVIFLGADVTHPPAGDGKKPSIAAVVGSMDAHPNRYCATVRVQQHRQEIIQDLAAMVRELLIQFYKSTRFKPTRIIFYRDGVSEGQFQQVLHHELLAIREACIKLEKDYQPGITFIVVQKRHHTRLFCTDKNERVGKSGNIPAGTTVDTKITHPTEFDFYLCSHAGIQGTSRPSHYHVLWDDNRFSSDELQILTYQLCHTYVRCTRSVSIPAPAYYAHLVAFRARYHLVDKEHDSAEGSHTSGQSNGRDHQALAKAVQVHQDTLRTMYFA</sequence>
<accession>O77503</accession>
<name>AGO2_RABIT</name>
<feature type="chain" id="PRO_0000194059" description="Protein argonaute-2">
    <location>
        <begin position="1" status="less than"/>
        <end position="840"/>
    </location>
</feature>
<feature type="domain" description="PAZ" evidence="4">
    <location>
        <begin position="210"/>
        <end position="329"/>
    </location>
</feature>
<feature type="domain" description="Piwi" evidence="3">
    <location>
        <begin position="498"/>
        <end position="799"/>
    </location>
</feature>
<feature type="binding site" evidence="3">
    <location>
        <position position="578"/>
    </location>
    <ligand>
        <name>a divalent metal cation</name>
        <dbReference type="ChEBI" id="CHEBI:60240"/>
    </ligand>
</feature>
<feature type="binding site" evidence="3">
    <location>
        <position position="650"/>
    </location>
    <ligand>
        <name>a divalent metal cation</name>
        <dbReference type="ChEBI" id="CHEBI:60240"/>
    </ligand>
</feature>
<feature type="binding site" evidence="3">
    <location>
        <position position="788"/>
    </location>
    <ligand>
        <name>a divalent metal cation</name>
        <dbReference type="ChEBI" id="CHEBI:60240"/>
    </ligand>
</feature>
<feature type="modified residue" description="Phosphoserine" evidence="2">
    <location>
        <position position="368"/>
    </location>
</feature>
<feature type="modified residue" description="4-hydroxyproline" evidence="3">
    <location>
        <position position="681"/>
    </location>
</feature>
<feature type="modified residue" description="Phosphoserine" evidence="2">
    <location>
        <position position="805"/>
    </location>
</feature>
<feature type="modified residue" description="Phosphoserine" evidence="2">
    <location>
        <position position="809"/>
    </location>
</feature>
<feature type="modified residue" description="Phosphoserine" evidence="2">
    <location>
        <position position="812"/>
    </location>
</feature>
<feature type="modified residue" description="Phosphoserine" evidence="2">
    <location>
        <position position="815"/>
    </location>
</feature>
<feature type="non-terminal residue">
    <location>
        <position position="1"/>
    </location>
</feature>
<organism>
    <name type="scientific">Oryctolagus cuniculus</name>
    <name type="common">Rabbit</name>
    <dbReference type="NCBI Taxonomy" id="9986"/>
    <lineage>
        <taxon>Eukaryota</taxon>
        <taxon>Metazoa</taxon>
        <taxon>Chordata</taxon>
        <taxon>Craniata</taxon>
        <taxon>Vertebrata</taxon>
        <taxon>Euteleostomi</taxon>
        <taxon>Mammalia</taxon>
        <taxon>Eutheria</taxon>
        <taxon>Euarchontoglires</taxon>
        <taxon>Glires</taxon>
        <taxon>Lagomorpha</taxon>
        <taxon>Leporidae</taxon>
        <taxon>Oryctolagus</taxon>
    </lineage>
</organism>
<proteinExistence type="evidence at protein level"/>
<gene>
    <name type="primary">AGO2</name>
    <name type="synonym">EIF2C2</name>
</gene>
<protein>
    <recommendedName>
        <fullName evidence="3">Protein argonaute-2</fullName>
        <shortName evidence="3">Argonaute2</shortName>
        <ecNumber evidence="3">3.1.26.n2</ecNumber>
    </recommendedName>
    <alternativeName>
        <fullName>Argonaute RISC catalytic component 2</fullName>
    </alternativeName>
    <alternativeName>
        <fullName evidence="3">Eukaryotic translation initiation factor 2C 2</fullName>
        <shortName evidence="3">eIF-2C 2</shortName>
        <shortName evidence="3">eIF2C 2</shortName>
    </alternativeName>
    <alternativeName>
        <fullName evidence="3">Protein slicer</fullName>
    </alternativeName>
</protein>
<reference key="1">
    <citation type="journal article" date="1998" name="Gene">
        <title>Molecular cloning and characterization of a rabbit eIF2C protein.</title>
        <authorList>
            <person name="Zou C."/>
            <person name="Zhang Z."/>
            <person name="Wu S."/>
            <person name="Osterman J.C."/>
        </authorList>
    </citation>
    <scope>NUCLEOTIDE SEQUENCE [MRNA]</scope>
    <scope>PARTIAL PROTEIN SEQUENCE</scope>
    <source>
        <tissue>Liver</tissue>
    </source>
</reference>
<keyword id="KW-0963">Cytoplasm</keyword>
<keyword id="KW-0903">Direct protein sequencing</keyword>
<keyword id="KW-0255">Endonuclease</keyword>
<keyword id="KW-0378">Hydrolase</keyword>
<keyword id="KW-0379">Hydroxylation</keyword>
<keyword id="KW-0479">Metal-binding</keyword>
<keyword id="KW-0540">Nuclease</keyword>
<keyword id="KW-0539">Nucleus</keyword>
<keyword id="KW-0597">Phosphoprotein</keyword>
<keyword id="KW-1185">Reference proteome</keyword>
<keyword id="KW-0678">Repressor</keyword>
<keyword id="KW-0687">Ribonucleoprotein</keyword>
<keyword id="KW-0694">RNA-binding</keyword>
<keyword id="KW-0943">RNA-mediated gene silencing</keyword>
<keyword id="KW-0804">Transcription</keyword>
<keyword id="KW-0805">Transcription regulation</keyword>
<keyword id="KW-0810">Translation regulation</keyword>
<keyword id="KW-0832">Ubl conjugation</keyword>
<evidence type="ECO:0000250" key="1">
    <source>
        <dbReference type="UniProtKB" id="Q8CJG0"/>
    </source>
</evidence>
<evidence type="ECO:0000250" key="2">
    <source>
        <dbReference type="UniProtKB" id="Q9UKV8"/>
    </source>
</evidence>
<evidence type="ECO:0000255" key="3">
    <source>
        <dbReference type="HAMAP-Rule" id="MF_03031"/>
    </source>
</evidence>
<evidence type="ECO:0000255" key="4">
    <source>
        <dbReference type="PROSITE-ProRule" id="PRU00142"/>
    </source>
</evidence>
<evidence type="ECO:0000305" key="5"/>
<dbReference type="EC" id="3.1.26.n2" evidence="3"/>
<dbReference type="EMBL" id="AF005355">
    <property type="protein sequence ID" value="AAC24323.1"/>
    <property type="status" value="ALT_INIT"/>
    <property type="molecule type" value="mRNA"/>
</dbReference>
<dbReference type="PIR" id="PC6505">
    <property type="entry name" value="JC6569"/>
</dbReference>
<dbReference type="RefSeq" id="NP_001076179.1">
    <property type="nucleotide sequence ID" value="NM_001082710.1"/>
</dbReference>
<dbReference type="SMR" id="O77503"/>
<dbReference type="FunCoup" id="O77503">
    <property type="interactions" value="1429"/>
</dbReference>
<dbReference type="STRING" id="9986.ENSOCUP00000019687"/>
<dbReference type="PaxDb" id="9986-ENSOCUP00000005257"/>
<dbReference type="GeneID" id="100009457"/>
<dbReference type="KEGG" id="ocu:100009457"/>
<dbReference type="CTD" id="27161"/>
<dbReference type="eggNOG" id="KOG1041">
    <property type="taxonomic scope" value="Eukaryota"/>
</dbReference>
<dbReference type="InParanoid" id="O77503"/>
<dbReference type="OrthoDB" id="10252740at2759"/>
<dbReference type="Proteomes" id="UP000001811">
    <property type="component" value="Unplaced"/>
</dbReference>
<dbReference type="GO" id="GO:0005737">
    <property type="term" value="C:cytoplasm"/>
    <property type="evidence" value="ECO:0000250"/>
    <property type="project" value="UniProtKB"/>
</dbReference>
<dbReference type="GO" id="GO:0005634">
    <property type="term" value="C:nucleus"/>
    <property type="evidence" value="ECO:0007669"/>
    <property type="project" value="UniProtKB-SubCell"/>
</dbReference>
<dbReference type="GO" id="GO:0000932">
    <property type="term" value="C:P-body"/>
    <property type="evidence" value="ECO:0007669"/>
    <property type="project" value="UniProtKB-SubCell"/>
</dbReference>
<dbReference type="GO" id="GO:0016442">
    <property type="term" value="C:RISC complex"/>
    <property type="evidence" value="ECO:0000250"/>
    <property type="project" value="UniProtKB"/>
</dbReference>
<dbReference type="GO" id="GO:0070578">
    <property type="term" value="C:RISC-loading complex"/>
    <property type="evidence" value="ECO:0000250"/>
    <property type="project" value="UniProtKB"/>
</dbReference>
<dbReference type="GO" id="GO:0070551">
    <property type="term" value="F:endoribonuclease activity, cleaving siRNA-paired mRNA"/>
    <property type="evidence" value="ECO:0000250"/>
    <property type="project" value="UniProtKB"/>
</dbReference>
<dbReference type="GO" id="GO:0046872">
    <property type="term" value="F:metal ion binding"/>
    <property type="evidence" value="ECO:0007669"/>
    <property type="project" value="UniProtKB-KW"/>
</dbReference>
<dbReference type="GO" id="GO:0098808">
    <property type="term" value="F:mRNA cap binding"/>
    <property type="evidence" value="ECO:0000250"/>
    <property type="project" value="UniProtKB"/>
</dbReference>
<dbReference type="GO" id="GO:0000340">
    <property type="term" value="F:RNA 7-methylguanosine cap binding"/>
    <property type="evidence" value="ECO:0000250"/>
    <property type="project" value="UniProtKB"/>
</dbReference>
<dbReference type="GO" id="GO:0035197">
    <property type="term" value="F:siRNA binding"/>
    <property type="evidence" value="ECO:0000250"/>
    <property type="project" value="UniProtKB"/>
</dbReference>
<dbReference type="GO" id="GO:0035278">
    <property type="term" value="P:miRNA-mediated gene silencing by inhibition of translation"/>
    <property type="evidence" value="ECO:0000250"/>
    <property type="project" value="UniProtKB"/>
</dbReference>
<dbReference type="GO" id="GO:0035279">
    <property type="term" value="P:miRNA-mediated gene silencing by mRNA destabilization"/>
    <property type="evidence" value="ECO:0000250"/>
    <property type="project" value="UniProtKB"/>
</dbReference>
<dbReference type="GO" id="GO:0045947">
    <property type="term" value="P:negative regulation of translational initiation"/>
    <property type="evidence" value="ECO:0000250"/>
    <property type="project" value="UniProtKB"/>
</dbReference>
<dbReference type="GO" id="GO:1900153">
    <property type="term" value="P:positive regulation of nuclear-transcribed mRNA catabolic process, deadenylation-dependent decay"/>
    <property type="evidence" value="ECO:0000250"/>
    <property type="project" value="UniProtKB"/>
</dbReference>
<dbReference type="GO" id="GO:0060213">
    <property type="term" value="P:positive regulation of nuclear-transcribed mRNA poly(A) tail shortening"/>
    <property type="evidence" value="ECO:0000250"/>
    <property type="project" value="UniProtKB"/>
</dbReference>
<dbReference type="GO" id="GO:0031054">
    <property type="term" value="P:pre-miRNA processing"/>
    <property type="evidence" value="ECO:0000250"/>
    <property type="project" value="UniProtKB"/>
</dbReference>
<dbReference type="GO" id="GO:0006355">
    <property type="term" value="P:regulation of DNA-templated transcription"/>
    <property type="evidence" value="ECO:0007669"/>
    <property type="project" value="InterPro"/>
</dbReference>
<dbReference type="GO" id="GO:0031047">
    <property type="term" value="P:regulatory ncRNA-mediated gene silencing"/>
    <property type="evidence" value="ECO:0000250"/>
    <property type="project" value="UniProtKB"/>
</dbReference>
<dbReference type="CDD" id="cd02846">
    <property type="entry name" value="PAZ_argonaute_like"/>
    <property type="match status" value="1"/>
</dbReference>
<dbReference type="CDD" id="cd04657">
    <property type="entry name" value="Piwi_ago-like"/>
    <property type="match status" value="1"/>
</dbReference>
<dbReference type="FunFam" id="2.170.260.10:FF:000001">
    <property type="entry name" value="Protein argonaute-2"/>
    <property type="match status" value="1"/>
</dbReference>
<dbReference type="FunFam" id="3.30.420.10:FF:000001">
    <property type="entry name" value="Protein argonaute-2"/>
    <property type="match status" value="1"/>
</dbReference>
<dbReference type="FunFam" id="3.40.50.2300:FF:000005">
    <property type="entry name" value="Protein argonaute-2"/>
    <property type="match status" value="1"/>
</dbReference>
<dbReference type="Gene3D" id="3.40.50.2300">
    <property type="match status" value="1"/>
</dbReference>
<dbReference type="Gene3D" id="2.170.260.10">
    <property type="entry name" value="paz domain"/>
    <property type="match status" value="1"/>
</dbReference>
<dbReference type="Gene3D" id="3.30.420.10">
    <property type="entry name" value="Ribonuclease H-like superfamily/Ribonuclease H"/>
    <property type="match status" value="1"/>
</dbReference>
<dbReference type="HAMAP" id="MF_03031">
    <property type="entry name" value="AGO2"/>
    <property type="match status" value="1"/>
</dbReference>
<dbReference type="InterPro" id="IPR028602">
    <property type="entry name" value="AGO2"/>
</dbReference>
<dbReference type="InterPro" id="IPR014811">
    <property type="entry name" value="ArgoL1"/>
</dbReference>
<dbReference type="InterPro" id="IPR032472">
    <property type="entry name" value="ArgoL2"/>
</dbReference>
<dbReference type="InterPro" id="IPR032473">
    <property type="entry name" value="Argonaute_Mid_dom"/>
</dbReference>
<dbReference type="InterPro" id="IPR032474">
    <property type="entry name" value="Argonaute_N"/>
</dbReference>
<dbReference type="InterPro" id="IPR003100">
    <property type="entry name" value="PAZ_dom"/>
</dbReference>
<dbReference type="InterPro" id="IPR036085">
    <property type="entry name" value="PAZ_dom_sf"/>
</dbReference>
<dbReference type="InterPro" id="IPR003165">
    <property type="entry name" value="Piwi"/>
</dbReference>
<dbReference type="InterPro" id="IPR045246">
    <property type="entry name" value="Piwi_ago-like"/>
</dbReference>
<dbReference type="InterPro" id="IPR012337">
    <property type="entry name" value="RNaseH-like_sf"/>
</dbReference>
<dbReference type="InterPro" id="IPR036397">
    <property type="entry name" value="RNaseH_sf"/>
</dbReference>
<dbReference type="PANTHER" id="PTHR22891">
    <property type="entry name" value="EUKARYOTIC TRANSLATION INITIATION FACTOR 2C"/>
    <property type="match status" value="1"/>
</dbReference>
<dbReference type="Pfam" id="PF08699">
    <property type="entry name" value="ArgoL1"/>
    <property type="match status" value="1"/>
</dbReference>
<dbReference type="Pfam" id="PF16488">
    <property type="entry name" value="ArgoL2"/>
    <property type="match status" value="1"/>
</dbReference>
<dbReference type="Pfam" id="PF16487">
    <property type="entry name" value="ArgoMid"/>
    <property type="match status" value="1"/>
</dbReference>
<dbReference type="Pfam" id="PF16486">
    <property type="entry name" value="ArgoN"/>
    <property type="match status" value="1"/>
</dbReference>
<dbReference type="Pfam" id="PF02170">
    <property type="entry name" value="PAZ"/>
    <property type="match status" value="1"/>
</dbReference>
<dbReference type="Pfam" id="PF02171">
    <property type="entry name" value="Piwi"/>
    <property type="match status" value="1"/>
</dbReference>
<dbReference type="SMART" id="SM01163">
    <property type="entry name" value="DUF1785"/>
    <property type="match status" value="1"/>
</dbReference>
<dbReference type="SMART" id="SM00949">
    <property type="entry name" value="PAZ"/>
    <property type="match status" value="1"/>
</dbReference>
<dbReference type="SMART" id="SM00950">
    <property type="entry name" value="Piwi"/>
    <property type="match status" value="1"/>
</dbReference>
<dbReference type="SUPFAM" id="SSF101690">
    <property type="entry name" value="PAZ domain"/>
    <property type="match status" value="1"/>
</dbReference>
<dbReference type="SUPFAM" id="SSF53098">
    <property type="entry name" value="Ribonuclease H-like"/>
    <property type="match status" value="1"/>
</dbReference>
<dbReference type="PROSITE" id="PS50821">
    <property type="entry name" value="PAZ"/>
    <property type="match status" value="1"/>
</dbReference>
<dbReference type="PROSITE" id="PS50822">
    <property type="entry name" value="PIWI"/>
    <property type="match status" value="1"/>
</dbReference>
<comment type="function">
    <text evidence="3">Required for RNA-mediated gene silencing (RNAi) by the RNA-induced silencing complex (RISC). The 'minimal RISC' appears to include AGO2 bound to a short guide RNA such as a microRNA (miRNA) or short interfering RNA (siRNA). These guide RNAs direct RISC to complementary mRNAs that are targets for RISC-mediated gene silencing. The precise mechanism of gene silencing depends on the degree of complementarity between the miRNA or siRNA and its target. Binding of RISC to a perfectly complementary mRNA generally results in silencing due to endonucleolytic cleavage of the mRNA specifically by AGO2. Binding of RISC to a partially complementary mRNA results in silencing through inhibition of translation, and this is independent of endonuclease activity. May inhibit translation initiation by binding to the 7-methylguanosine cap, thereby preventing the recruitment of the translation initiation factor eIF4-E. May also inhibit translation initiation via interaction with EIF6, which itself binds to the 60S ribosomal subunit and prevents its association with the 40S ribosomal subunit. The inhibition of translational initiation leads to the accumulation of the affected mRNA in cytoplasmic processing bodies (P-bodies), where mRNA degradation may subsequently occur. In some cases RISC-mediated translational repression is also observed for miRNAs that perfectly match the 3' untranslated region (3'-UTR). Can also up-regulate the translation of specific mRNAs under certain growth conditions. Binds to the AU element of the 3'-UTR of the TNF (TNF-alpha) mRNA and up-regulates translation under conditions of serum starvation. Also required for transcriptional gene silencing (TGS), in which short RNAs known as antigene RNAs or agRNAs direct the transcriptional repression of complementary promoter regions.</text>
</comment>
<comment type="catalytic activity">
    <reaction evidence="3">
        <text>Endonucleolytic cleavage to 5'-phosphomonoester.</text>
        <dbReference type="EC" id="3.1.26.n2"/>
    </reaction>
</comment>
<comment type="subunit">
    <text evidence="1 2 3">Interacts with DICER1 through its Piwi domain and with TARBP2 during assembly of the RNA-induced silencing complex (RISC). Together, DICER1, AGO2 and TARBP2 constitute the trimeric RISC loading complex (RLC), or micro-RNA (miRNA) loading complex (miRLC). Within the RLC/miRLC, DICER1 and TARBP2 are required to process precursor miRNAs (pre-miRNAs) to mature miRNAs and then load them onto AGO2. AGO2 bound to the mature miRNA constitutes the minimal RISC and may subsequently dissociate from DICER1 and TARBP2. Note however that the term RISC has also been used to describe the trimeric RLC/miRLC. The formation of RISC complexes containing siRNAs rather than miRNAs appears to occur independently of DICER1. Interacts with AGO1. Also interacts with DDB1, DDX5, DDX6, DDX20, DHX30, DHX36, DDX47, DHX9, ELAVL, FXR1, GEMIN4, HNRNPF, IGF2BP1, ILF3, IMP8, MATR3, PABPC1, PRMT5, P4HA1, P4HB, RBM4, SART3, TNRC6A, TNRC6B, UPF1 and YBX1. Interacts with the P-body components DCP1A and XRN1. Associates with polysomes and messenger ribonucleoproteins (mNRPs). Interacts with RBM4; the interaction is modulated under stress-induced conditions, occurs under both cell proliferation and differentiation conditions and in an RNA- and phosphorylation-independent manner. Interacts with LIMD1, WTIP and AJUBA. Interacts with TRIM71; the interaction increases in presence of RNA. Interacts with APOBEC3G in an RNA-dependent manner. Interacts with APOBEC3A, APOBEC3C, APOBEC3F and APOBEC3H. Interacts with DICER1, TARBP2, EIF6, MOV10 and RPL7A (60S ribosome subunit); they form a large RNA-induced silencing complex (RISC). Interacts with FMR1. Interacts with ZFP36. Interacts with RC3H1; the interaction is RNA independent (By similarity). Found in a complex composed of AGO2, CHD7 and ARB2A (By similarity). Interacts with SND1 and SYT11 (By similarity). Interacts with CLNK (By similarity). Interacts with GARRE1 (By similarity).</text>
</comment>
<comment type="subcellular location">
    <subcellularLocation>
        <location evidence="3">Cytoplasm</location>
        <location evidence="3">P-body</location>
    </subcellularLocation>
    <subcellularLocation>
        <location evidence="3">Nucleus</location>
    </subcellularLocation>
    <text evidence="3">Translational repression of mRNAs results in their recruitment to P-bodies. Translocation to the nucleus requires IMP8.</text>
</comment>
<comment type="domain">
    <text evidence="3">The Piwi domain may perform RNA cleavage by a mechanism similar to that of RNase H. However, while RNase H utilizes a triad of Asp-Asp-Glu (DDE) for metal ion coordination, this protein appears to utilize a triad of Asp-Asp-His (DDH).</text>
</comment>
<comment type="PTM">
    <text evidence="3">Hydroxylated. 4-hydroxylation appears to enhance protein stability but is not required for miRNA-binding or endonuclease activity.</text>
</comment>
<comment type="PTM">
    <text evidence="2">Ubiquitinated on surface-exposed lysines by a SCF-like E3 ubiquitin-protein ligase complex containing ZSWIM8 during target-directed microRNA degradation (TDMD), a process that mediates degradation of microRNAs (miRNAs). Ubiquitination by the SCF-like E3 ubiquitin-protein ligase complex containing ZSWIM8 leads to its subsequent degradation, thereby exposing miRNAs for degradation. ZSWIM8 recognizes and binds AGO2 when it is engaged with a TDMD target.</text>
</comment>
<comment type="PTM">
    <text evidence="2">Phosphorylation at Ser-368 by AKT3; leads to up-regulate translational repression of microRNA target and down-regulate endonucleolytic cleavage.</text>
</comment>
<comment type="PTM">
    <text evidence="2">A phosphorylation cycle of C-terminal serine cluster (Ser-805-Ser-815) regulates the release of target mRNAs. Target-binding leads to phosphorylation of these residues by CSNK1A1, which reduces the affinity of AGO2 for mRNA and enables target release. The ANKRD52-PPP6C phosphatase complex dephosphorylates the residues, which primes AGO2 for binding a new target.</text>
</comment>
<comment type="similarity">
    <text evidence="3">Belongs to the argonaute family. Ago subfamily.</text>
</comment>
<comment type="sequence caution" evidence="5">
    <conflict type="erroneous initiation">
        <sequence resource="EMBL-CDS" id="AAC24323"/>
    </conflict>
    <text>Truncated N-terminus.</text>
</comment>